<dbReference type="EC" id="4.3.3.6" evidence="1"/>
<dbReference type="EMBL" id="AE010299">
    <property type="protein sequence ID" value="AAM04980.1"/>
    <property type="status" value="ALT_INIT"/>
    <property type="molecule type" value="Genomic_DNA"/>
</dbReference>
<dbReference type="PDB" id="9DVF">
    <property type="method" value="EM"/>
    <property type="resolution" value="3.38 A"/>
    <property type="chains" value="A/B/C/D/E/F/G/H/I/J/K/L=11-301"/>
</dbReference>
<dbReference type="PDBsum" id="9DVF"/>
<dbReference type="EMDB" id="EMD-47202"/>
<dbReference type="SMR" id="Q8TQH6"/>
<dbReference type="FunCoup" id="Q8TQH6">
    <property type="interactions" value="162"/>
</dbReference>
<dbReference type="STRING" id="188937.MA_1567"/>
<dbReference type="EnsemblBacteria" id="AAM04980">
    <property type="protein sequence ID" value="AAM04980"/>
    <property type="gene ID" value="MA_1567"/>
</dbReference>
<dbReference type="KEGG" id="mac:MA_1567"/>
<dbReference type="HOGENOM" id="CLU_055352_1_0_2"/>
<dbReference type="InParanoid" id="Q8TQH6"/>
<dbReference type="PhylomeDB" id="Q8TQH6"/>
<dbReference type="UniPathway" id="UPA00245"/>
<dbReference type="Proteomes" id="UP000002487">
    <property type="component" value="Chromosome"/>
</dbReference>
<dbReference type="GO" id="GO:0016843">
    <property type="term" value="F:amine-lyase activity"/>
    <property type="evidence" value="ECO:0000318"/>
    <property type="project" value="GO_Central"/>
</dbReference>
<dbReference type="GO" id="GO:0036381">
    <property type="term" value="F:pyridoxal 5'-phosphate synthase (glutamine hydrolysing) activity"/>
    <property type="evidence" value="ECO:0007669"/>
    <property type="project" value="UniProtKB-UniRule"/>
</dbReference>
<dbReference type="GO" id="GO:0006520">
    <property type="term" value="P:amino acid metabolic process"/>
    <property type="evidence" value="ECO:0000318"/>
    <property type="project" value="GO_Central"/>
</dbReference>
<dbReference type="GO" id="GO:0042823">
    <property type="term" value="P:pyridoxal phosphate biosynthetic process"/>
    <property type="evidence" value="ECO:0000318"/>
    <property type="project" value="GO_Central"/>
</dbReference>
<dbReference type="GO" id="GO:0008615">
    <property type="term" value="P:pyridoxine biosynthetic process"/>
    <property type="evidence" value="ECO:0000318"/>
    <property type="project" value="GO_Central"/>
</dbReference>
<dbReference type="CDD" id="cd04727">
    <property type="entry name" value="pdxS"/>
    <property type="match status" value="1"/>
</dbReference>
<dbReference type="FunFam" id="3.20.20.70:FF:000374">
    <property type="entry name" value="Pyridoxal 5'-phosphate synthase subunit PdxS"/>
    <property type="match status" value="1"/>
</dbReference>
<dbReference type="Gene3D" id="3.20.20.70">
    <property type="entry name" value="Aldolase class I"/>
    <property type="match status" value="1"/>
</dbReference>
<dbReference type="HAMAP" id="MF_01824">
    <property type="entry name" value="PdxS"/>
    <property type="match status" value="1"/>
</dbReference>
<dbReference type="InterPro" id="IPR013785">
    <property type="entry name" value="Aldolase_TIM"/>
</dbReference>
<dbReference type="InterPro" id="IPR001852">
    <property type="entry name" value="PdxS/SNZ"/>
</dbReference>
<dbReference type="InterPro" id="IPR033755">
    <property type="entry name" value="PdxS/SNZ_N"/>
</dbReference>
<dbReference type="InterPro" id="IPR011060">
    <property type="entry name" value="RibuloseP-bd_barrel"/>
</dbReference>
<dbReference type="NCBIfam" id="NF003215">
    <property type="entry name" value="PRK04180.1"/>
    <property type="match status" value="1"/>
</dbReference>
<dbReference type="NCBIfam" id="TIGR00343">
    <property type="entry name" value="pyridoxal 5'-phosphate synthase lyase subunit PdxS"/>
    <property type="match status" value="1"/>
</dbReference>
<dbReference type="PANTHER" id="PTHR31829">
    <property type="entry name" value="PYRIDOXAL 5'-PHOSPHATE SYNTHASE SUBUNIT SNZ1-RELATED"/>
    <property type="match status" value="1"/>
</dbReference>
<dbReference type="PANTHER" id="PTHR31829:SF0">
    <property type="entry name" value="PYRIDOXAL 5'-PHOSPHATE SYNTHASE SUBUNIT SNZ1-RELATED"/>
    <property type="match status" value="1"/>
</dbReference>
<dbReference type="Pfam" id="PF01680">
    <property type="entry name" value="SOR_SNZ"/>
    <property type="match status" value="1"/>
</dbReference>
<dbReference type="PIRSF" id="PIRSF029271">
    <property type="entry name" value="Pdx1"/>
    <property type="match status" value="1"/>
</dbReference>
<dbReference type="SUPFAM" id="SSF51366">
    <property type="entry name" value="Ribulose-phoshate binding barrel"/>
    <property type="match status" value="1"/>
</dbReference>
<dbReference type="PROSITE" id="PS01235">
    <property type="entry name" value="PDXS_SNZ_1"/>
    <property type="match status" value="1"/>
</dbReference>
<dbReference type="PROSITE" id="PS51129">
    <property type="entry name" value="PDXS_SNZ_2"/>
    <property type="match status" value="1"/>
</dbReference>
<keyword id="KW-0002">3D-structure</keyword>
<keyword id="KW-0456">Lyase</keyword>
<keyword id="KW-0663">Pyridoxal phosphate</keyword>
<keyword id="KW-1185">Reference proteome</keyword>
<keyword id="KW-0704">Schiff base</keyword>
<comment type="function">
    <text evidence="1">Catalyzes the formation of pyridoxal 5'-phosphate from ribose 5-phosphate (RBP), glyceraldehyde 3-phosphate (G3P) and ammonia. The ammonia is provided by the PdxT subunit. Can also use ribulose 5-phosphate and dihydroxyacetone phosphate as substrates, resulting from enzyme-catalyzed isomerization of RBP and G3P, respectively.</text>
</comment>
<comment type="catalytic activity">
    <reaction evidence="1">
        <text>aldehydo-D-ribose 5-phosphate + D-glyceraldehyde 3-phosphate + L-glutamine = pyridoxal 5'-phosphate + L-glutamate + phosphate + 3 H2O + H(+)</text>
        <dbReference type="Rhea" id="RHEA:31507"/>
        <dbReference type="ChEBI" id="CHEBI:15377"/>
        <dbReference type="ChEBI" id="CHEBI:15378"/>
        <dbReference type="ChEBI" id="CHEBI:29985"/>
        <dbReference type="ChEBI" id="CHEBI:43474"/>
        <dbReference type="ChEBI" id="CHEBI:58273"/>
        <dbReference type="ChEBI" id="CHEBI:58359"/>
        <dbReference type="ChEBI" id="CHEBI:59776"/>
        <dbReference type="ChEBI" id="CHEBI:597326"/>
        <dbReference type="EC" id="4.3.3.6"/>
    </reaction>
</comment>
<comment type="pathway">
    <text evidence="1">Cofactor biosynthesis; pyridoxal 5'-phosphate biosynthesis.</text>
</comment>
<comment type="subunit">
    <text evidence="1">In the presence of PdxT, forms a dodecamer of heterodimers.</text>
</comment>
<comment type="similarity">
    <text evidence="1">Belongs to the PdxS/SNZ family.</text>
</comment>
<comment type="sequence caution" evidence="2">
    <conflict type="erroneous initiation">
        <sequence resource="EMBL-CDS" id="AAM04980"/>
    </conflict>
</comment>
<protein>
    <recommendedName>
        <fullName evidence="1">Pyridoxal 5'-phosphate synthase subunit PdxS</fullName>
        <shortName evidence="1">PLP synthase subunit PdxS</shortName>
        <ecNumber evidence="1">4.3.3.6</ecNumber>
    </recommendedName>
    <alternativeName>
        <fullName evidence="1">Pdx1</fullName>
    </alternativeName>
</protein>
<accession>Q8TQH6</accession>
<evidence type="ECO:0000255" key="1">
    <source>
        <dbReference type="HAMAP-Rule" id="MF_01824"/>
    </source>
</evidence>
<evidence type="ECO:0000305" key="2"/>
<evidence type="ECO:0007829" key="3">
    <source>
        <dbReference type="PDB" id="9DVF"/>
    </source>
</evidence>
<reference key="1">
    <citation type="journal article" date="2002" name="Genome Res.">
        <title>The genome of Methanosarcina acetivorans reveals extensive metabolic and physiological diversity.</title>
        <authorList>
            <person name="Galagan J.E."/>
            <person name="Nusbaum C."/>
            <person name="Roy A."/>
            <person name="Endrizzi M.G."/>
            <person name="Macdonald P."/>
            <person name="FitzHugh W."/>
            <person name="Calvo S."/>
            <person name="Engels R."/>
            <person name="Smirnov S."/>
            <person name="Atnoor D."/>
            <person name="Brown A."/>
            <person name="Allen N."/>
            <person name="Naylor J."/>
            <person name="Stange-Thomann N."/>
            <person name="DeArellano K."/>
            <person name="Johnson R."/>
            <person name="Linton L."/>
            <person name="McEwan P."/>
            <person name="McKernan K."/>
            <person name="Talamas J."/>
            <person name="Tirrell A."/>
            <person name="Ye W."/>
            <person name="Zimmer A."/>
            <person name="Barber R.D."/>
            <person name="Cann I."/>
            <person name="Graham D.E."/>
            <person name="Grahame D.A."/>
            <person name="Guss A.M."/>
            <person name="Hedderich R."/>
            <person name="Ingram-Smith C."/>
            <person name="Kuettner H.C."/>
            <person name="Krzycki J.A."/>
            <person name="Leigh J.A."/>
            <person name="Li W."/>
            <person name="Liu J."/>
            <person name="Mukhopadhyay B."/>
            <person name="Reeve J.N."/>
            <person name="Smith K."/>
            <person name="Springer T.A."/>
            <person name="Umayam L.A."/>
            <person name="White O."/>
            <person name="White R.H."/>
            <person name="de Macario E.C."/>
            <person name="Ferry J.G."/>
            <person name="Jarrell K.F."/>
            <person name="Jing H."/>
            <person name="Macario A.J.L."/>
            <person name="Paulsen I.T."/>
            <person name="Pritchett M."/>
            <person name="Sowers K.R."/>
            <person name="Swanson R.V."/>
            <person name="Zinder S.H."/>
            <person name="Lander E."/>
            <person name="Metcalf W.W."/>
            <person name="Birren B."/>
        </authorList>
    </citation>
    <scope>NUCLEOTIDE SEQUENCE [LARGE SCALE GENOMIC DNA]</scope>
    <source>
        <strain>ATCC 35395 / DSM 2834 / JCM 12185 / C2A</strain>
    </source>
</reference>
<sequence>MTFMDFEKLRHGTELIKRGFARMQKGGVIMDVTTPEQARIAEEAGAVAVMALQAVPADIRKAGGVARMADPEIVQQIIETVTIPVMAKARIGHFVEAEILEALGVDMVDESEVLTPADPFYHIDKTQFTVPFVCGARNLGEALRRINEGAAMIRTKGEAGTGDVSQAVKHMKQIQGEIRALAGKTKEELIMVAREIEAPIELVVETAKMQRLPVVNFAAGGVATPADAALMMRLGADGVFVGSGIFKAENPEKMAKAVVEAVNNYDNPVKLAEISKGVGAGMKGISADMIPAQEALQERGW</sequence>
<organism>
    <name type="scientific">Methanosarcina acetivorans (strain ATCC 35395 / DSM 2834 / JCM 12185 / C2A)</name>
    <dbReference type="NCBI Taxonomy" id="188937"/>
    <lineage>
        <taxon>Archaea</taxon>
        <taxon>Methanobacteriati</taxon>
        <taxon>Methanobacteriota</taxon>
        <taxon>Stenosarchaea group</taxon>
        <taxon>Methanomicrobia</taxon>
        <taxon>Methanosarcinales</taxon>
        <taxon>Methanosarcinaceae</taxon>
        <taxon>Methanosarcina</taxon>
    </lineage>
</organism>
<proteinExistence type="evidence at protein level"/>
<name>PDXS_METAC</name>
<gene>
    <name evidence="1" type="primary">pdxS</name>
    <name type="synonym">pyrOA</name>
    <name type="ordered locus">MA_1567</name>
</gene>
<feature type="chain" id="PRO_0000109434" description="Pyridoxal 5'-phosphate synthase subunit PdxS">
    <location>
        <begin position="1"/>
        <end position="301"/>
    </location>
</feature>
<feature type="active site" description="Schiff-base intermediate with D-ribose 5-phosphate" evidence="1">
    <location>
        <position position="88"/>
    </location>
</feature>
<feature type="binding site" evidence="1">
    <location>
        <position position="31"/>
    </location>
    <ligand>
        <name>D-ribose 5-phosphate</name>
        <dbReference type="ChEBI" id="CHEBI:78346"/>
    </ligand>
</feature>
<feature type="binding site" evidence="1">
    <location>
        <position position="160"/>
    </location>
    <ligand>
        <name>D-ribose 5-phosphate</name>
        <dbReference type="ChEBI" id="CHEBI:78346"/>
    </ligand>
</feature>
<feature type="binding site" evidence="1">
    <location>
        <position position="172"/>
    </location>
    <ligand>
        <name>D-glyceraldehyde 3-phosphate</name>
        <dbReference type="ChEBI" id="CHEBI:59776"/>
    </ligand>
</feature>
<feature type="binding site" evidence="1">
    <location>
        <position position="221"/>
    </location>
    <ligand>
        <name>D-ribose 5-phosphate</name>
        <dbReference type="ChEBI" id="CHEBI:78346"/>
    </ligand>
</feature>
<feature type="binding site" evidence="1">
    <location>
        <begin position="242"/>
        <end position="243"/>
    </location>
    <ligand>
        <name>D-ribose 5-phosphate</name>
        <dbReference type="ChEBI" id="CHEBI:78346"/>
    </ligand>
</feature>
<feature type="helix" evidence="3">
    <location>
        <begin position="14"/>
        <end position="17"/>
    </location>
</feature>
<feature type="turn" evidence="3">
    <location>
        <begin position="18"/>
        <end position="20"/>
    </location>
</feature>
<feature type="turn" evidence="3">
    <location>
        <begin position="23"/>
        <end position="26"/>
    </location>
</feature>
<feature type="strand" evidence="3">
    <location>
        <begin position="27"/>
        <end position="34"/>
    </location>
</feature>
<feature type="helix" evidence="3">
    <location>
        <begin position="35"/>
        <end position="44"/>
    </location>
</feature>
<feature type="strand" evidence="3">
    <location>
        <begin position="47"/>
        <end position="51"/>
    </location>
</feature>
<feature type="helix" evidence="3">
    <location>
        <begin position="56"/>
        <end position="62"/>
    </location>
</feature>
<feature type="helix" evidence="3">
    <location>
        <begin position="71"/>
        <end position="80"/>
    </location>
</feature>
<feature type="strand" evidence="3">
    <location>
        <begin position="85"/>
        <end position="89"/>
    </location>
</feature>
<feature type="helix" evidence="3">
    <location>
        <begin position="96"/>
        <end position="103"/>
    </location>
</feature>
<feature type="strand" evidence="3">
    <location>
        <begin position="106"/>
        <end position="110"/>
    </location>
</feature>
<feature type="strand" evidence="3">
    <location>
        <begin position="112"/>
        <end position="114"/>
    </location>
</feature>
<feature type="helix" evidence="3">
    <location>
        <begin position="125"/>
        <end position="127"/>
    </location>
</feature>
<feature type="strand" evidence="3">
    <location>
        <begin position="132"/>
        <end position="138"/>
    </location>
</feature>
<feature type="helix" evidence="3">
    <location>
        <begin position="139"/>
        <end position="148"/>
    </location>
</feature>
<feature type="strand" evidence="3">
    <location>
        <begin position="153"/>
        <end position="155"/>
    </location>
</feature>
<feature type="helix" evidence="3">
    <location>
        <begin position="165"/>
        <end position="180"/>
    </location>
</feature>
<feature type="turn" evidence="3">
    <location>
        <begin position="181"/>
        <end position="183"/>
    </location>
</feature>
<feature type="helix" evidence="3">
    <location>
        <begin position="186"/>
        <end position="195"/>
    </location>
</feature>
<feature type="helix" evidence="3">
    <location>
        <begin position="200"/>
        <end position="209"/>
    </location>
</feature>
<feature type="strand" evidence="3">
    <location>
        <begin position="219"/>
        <end position="221"/>
    </location>
</feature>
<feature type="helix" evidence="3">
    <location>
        <begin position="225"/>
        <end position="233"/>
    </location>
</feature>
<feature type="strand" evidence="3">
    <location>
        <begin position="237"/>
        <end position="241"/>
    </location>
</feature>
<feature type="helix" evidence="3">
    <location>
        <begin position="243"/>
        <end position="246"/>
    </location>
</feature>
<feature type="helix" evidence="3">
    <location>
        <begin position="251"/>
        <end position="263"/>
    </location>
</feature>
<feature type="turn" evidence="3">
    <location>
        <begin position="264"/>
        <end position="266"/>
    </location>
</feature>
<feature type="helix" evidence="3">
    <location>
        <begin position="268"/>
        <end position="275"/>
    </location>
</feature>
<feature type="helix" evidence="3">
    <location>
        <begin position="287"/>
        <end position="289"/>
    </location>
</feature>
<feature type="helix" evidence="3">
    <location>
        <begin position="292"/>
        <end position="294"/>
    </location>
</feature>
<feature type="helix" evidence="3">
    <location>
        <begin position="296"/>
        <end position="298"/>
    </location>
</feature>